<sequence length="83" mass="9803">MTDKAVYFDGQELPWYIAEDGIGFQPSNNGLHTLTVEFLVETATFKSQWEINHDGEWAWLKRTVDLEMRVQTRAFDRIMKEYS</sequence>
<keyword id="KW-1185">Reference proteome</keyword>
<organism>
    <name type="scientific">Mycobacterium phage L5</name>
    <name type="common">Mycobacteriophage L5</name>
    <dbReference type="NCBI Taxonomy" id="31757"/>
    <lineage>
        <taxon>Viruses</taxon>
        <taxon>Duplodnaviria</taxon>
        <taxon>Heunggongvirae</taxon>
        <taxon>Uroviricota</taxon>
        <taxon>Caudoviricetes</taxon>
        <taxon>Fromanvirus</taxon>
    </lineage>
</organism>
<organismHost>
    <name type="scientific">Mycobacterium</name>
    <dbReference type="NCBI Taxonomy" id="1763"/>
</organismHost>
<accession>Q05252</accession>
<name>VG41_BPML5</name>
<gene>
    <name type="primary">41</name>
</gene>
<reference key="1">
    <citation type="journal article" date="1993" name="Mol. Microbiol.">
        <title>DNA sequence, structure and gene expression of mycobacteriophage L5: a phage system for mycobacterial genetics.</title>
        <authorList>
            <person name="Hatfull G.F."/>
            <person name="Sarkis G.J."/>
        </authorList>
    </citation>
    <scope>NUCLEOTIDE SEQUENCE [LARGE SCALE GENOMIC DNA]</scope>
</reference>
<protein>
    <recommendedName>
        <fullName>Gene 41 protein</fullName>
    </recommendedName>
    <alternativeName>
        <fullName>Gp41</fullName>
    </alternativeName>
</protein>
<proteinExistence type="predicted"/>
<feature type="chain" id="PRO_0000164766" description="Gene 41 protein">
    <location>
        <begin position="1"/>
        <end position="83"/>
    </location>
</feature>
<dbReference type="EMBL" id="Z18946">
    <property type="protein sequence ID" value="CAA79417.1"/>
    <property type="molecule type" value="Genomic_DNA"/>
</dbReference>
<dbReference type="PIR" id="S30986">
    <property type="entry name" value="S30986"/>
</dbReference>
<dbReference type="RefSeq" id="NP_039705.1">
    <property type="nucleotide sequence ID" value="NC_001335.1"/>
</dbReference>
<dbReference type="GeneID" id="2942945"/>
<dbReference type="KEGG" id="vg:2942945"/>
<dbReference type="OrthoDB" id="17325at10239"/>
<dbReference type="Proteomes" id="UP000002123">
    <property type="component" value="Genome"/>
</dbReference>